<feature type="chain" id="PRO_0000219475" description="Transcription factor Dp-1">
    <location>
        <begin position="1"/>
        <end position="410"/>
    </location>
</feature>
<feature type="DNA-binding region" evidence="2">
    <location>
        <begin position="113"/>
        <end position="195"/>
    </location>
</feature>
<feature type="region of interest" description="Disordered" evidence="3">
    <location>
        <begin position="73"/>
        <end position="116"/>
    </location>
</feature>
<feature type="region of interest" description="Interaction with CEBPA" evidence="6">
    <location>
        <begin position="105"/>
        <end position="127"/>
    </location>
</feature>
<feature type="region of interest" description="Dimerization" evidence="2">
    <location>
        <begin position="204"/>
        <end position="277"/>
    </location>
</feature>
<feature type="region of interest" description="Enhances binding of RB protein to E2F">
    <location>
        <begin position="211"/>
        <end position="327"/>
    </location>
</feature>
<feature type="region of interest" description="DCB1">
    <location>
        <begin position="214"/>
        <end position="246"/>
    </location>
</feature>
<feature type="region of interest" description="DCB2">
    <location>
        <begin position="259"/>
        <end position="315"/>
    </location>
</feature>
<feature type="region of interest" description="Disordered" evidence="3">
    <location>
        <begin position="370"/>
        <end position="410"/>
    </location>
</feature>
<feature type="short sequence motif" description="DEF box">
    <location>
        <begin position="161"/>
        <end position="195"/>
    </location>
</feature>
<feature type="compositionally biased region" description="Polar residues" evidence="3">
    <location>
        <begin position="73"/>
        <end position="100"/>
    </location>
</feature>
<feature type="compositionally biased region" description="Basic residues" evidence="3">
    <location>
        <begin position="104"/>
        <end position="116"/>
    </location>
</feature>
<feature type="compositionally biased region" description="Polar residues" evidence="3">
    <location>
        <begin position="373"/>
        <end position="385"/>
    </location>
</feature>
<feature type="compositionally biased region" description="Acidic residues" evidence="3">
    <location>
        <begin position="394"/>
        <end position="410"/>
    </location>
</feature>
<feature type="modified residue" description="N6-acetyllysine" evidence="12">
    <location>
        <position position="3"/>
    </location>
</feature>
<feature type="modified residue" description="Phosphoserine" evidence="13 14 15 16">
    <location>
        <position position="23"/>
    </location>
</feature>
<feature type="splice variant" id="VSP_056499" description="In isoform 2." evidence="10">
    <original>MAKDAGLIEANGELKVFIDQNLSPGKGVVSLVAVHPSTVNPLGKQLLPKTFGQSNVNIAQQVVIGTPQRPAASNTLVVGSPHTPSTHFASQNQPSDSSPWSAG</original>
    <variation>MSTLPSKW</variation>
    <location>
        <begin position="1"/>
        <end position="103"/>
    </location>
</feature>
<feature type="splice variant" id="VSP_056500" description="In isoform 2." evidence="10">
    <location>
        <begin position="358"/>
        <end position="361"/>
    </location>
</feature>
<feature type="sequence variant" id="VAR_029293" description="In dbSNP:rs4150823.">
    <original>D</original>
    <variation>N</variation>
    <location>
        <position position="401"/>
    </location>
</feature>
<feature type="helix" evidence="17">
    <location>
        <begin position="199"/>
        <end position="247"/>
    </location>
</feature>
<feature type="strand" evidence="17">
    <location>
        <begin position="253"/>
        <end position="260"/>
    </location>
</feature>
<feature type="strand" evidence="17">
    <location>
        <begin position="262"/>
        <end position="267"/>
    </location>
</feature>
<feature type="strand" evidence="17">
    <location>
        <begin position="272"/>
        <end position="276"/>
    </location>
</feature>
<feature type="strand" evidence="17">
    <location>
        <begin position="280"/>
        <end position="289"/>
    </location>
</feature>
<feature type="strand" evidence="17">
    <location>
        <begin position="291"/>
        <end position="295"/>
    </location>
</feature>
<feature type="helix" evidence="17">
    <location>
        <begin position="296"/>
        <end position="303"/>
    </location>
</feature>
<feature type="turn" evidence="17">
    <location>
        <begin position="304"/>
        <end position="308"/>
    </location>
</feature>
<feature type="helix" evidence="17">
    <location>
        <begin position="309"/>
        <end position="311"/>
    </location>
</feature>
<feature type="helix" evidence="17">
    <location>
        <begin position="316"/>
        <end position="324"/>
    </location>
</feature>
<feature type="helix" evidence="17">
    <location>
        <begin position="328"/>
        <end position="330"/>
    </location>
</feature>
<feature type="helix" evidence="17">
    <location>
        <begin position="331"/>
        <end position="337"/>
    </location>
</feature>
<organism>
    <name type="scientific">Homo sapiens</name>
    <name type="common">Human</name>
    <dbReference type="NCBI Taxonomy" id="9606"/>
    <lineage>
        <taxon>Eukaryota</taxon>
        <taxon>Metazoa</taxon>
        <taxon>Chordata</taxon>
        <taxon>Craniata</taxon>
        <taxon>Vertebrata</taxon>
        <taxon>Euteleostomi</taxon>
        <taxon>Mammalia</taxon>
        <taxon>Eutheria</taxon>
        <taxon>Euarchontoglires</taxon>
        <taxon>Primates</taxon>
        <taxon>Haplorrhini</taxon>
        <taxon>Catarrhini</taxon>
        <taxon>Hominidae</taxon>
        <taxon>Homo</taxon>
    </lineage>
</organism>
<keyword id="KW-0002">3D-structure</keyword>
<keyword id="KW-0007">Acetylation</keyword>
<keyword id="KW-0010">Activator</keyword>
<keyword id="KW-0025">Alternative splicing</keyword>
<keyword id="KW-0131">Cell cycle</keyword>
<keyword id="KW-0963">Cytoplasm</keyword>
<keyword id="KW-0238">DNA-binding</keyword>
<keyword id="KW-0539">Nucleus</keyword>
<keyword id="KW-0597">Phosphoprotein</keyword>
<keyword id="KW-1267">Proteomics identification</keyword>
<keyword id="KW-1185">Reference proteome</keyword>
<keyword id="KW-0804">Transcription</keyword>
<keyword id="KW-0805">Transcription regulation</keyword>
<keyword id="KW-0832">Ubl conjugation</keyword>
<reference key="1">
    <citation type="journal article" date="1993" name="Genes Dev.">
        <title>Heterodimerization of the transcription factors E2F-1 and DP-1 leads to cooperative trans-activation.</title>
        <authorList>
            <person name="Helin K."/>
            <person name="Wu C.-L."/>
            <person name="Fattaey A.R."/>
            <person name="Lees J.A."/>
            <person name="Dynlacht B.D."/>
            <person name="Ngwu C."/>
            <person name="Harlow E."/>
        </authorList>
    </citation>
    <scope>NUCLEOTIDE SEQUENCE [MRNA] (ISOFORM 1)</scope>
    <scope>FUNCTION</scope>
    <scope>SUBUNIT</scope>
</reference>
<reference key="2">
    <citation type="journal article" date="2004" name="Nat. Genet.">
        <title>Complete sequencing and characterization of 21,243 full-length human cDNAs.</title>
        <authorList>
            <person name="Ota T."/>
            <person name="Suzuki Y."/>
            <person name="Nishikawa T."/>
            <person name="Otsuki T."/>
            <person name="Sugiyama T."/>
            <person name="Irie R."/>
            <person name="Wakamatsu A."/>
            <person name="Hayashi K."/>
            <person name="Sato H."/>
            <person name="Nagai K."/>
            <person name="Kimura K."/>
            <person name="Makita H."/>
            <person name="Sekine M."/>
            <person name="Obayashi M."/>
            <person name="Nishi T."/>
            <person name="Shibahara T."/>
            <person name="Tanaka T."/>
            <person name="Ishii S."/>
            <person name="Yamamoto J."/>
            <person name="Saito K."/>
            <person name="Kawai Y."/>
            <person name="Isono Y."/>
            <person name="Nakamura Y."/>
            <person name="Nagahari K."/>
            <person name="Murakami K."/>
            <person name="Yasuda T."/>
            <person name="Iwayanagi T."/>
            <person name="Wagatsuma M."/>
            <person name="Shiratori A."/>
            <person name="Sudo H."/>
            <person name="Hosoiri T."/>
            <person name="Kaku Y."/>
            <person name="Kodaira H."/>
            <person name="Kondo H."/>
            <person name="Sugawara M."/>
            <person name="Takahashi M."/>
            <person name="Kanda K."/>
            <person name="Yokoi T."/>
            <person name="Furuya T."/>
            <person name="Kikkawa E."/>
            <person name="Omura Y."/>
            <person name="Abe K."/>
            <person name="Kamihara K."/>
            <person name="Katsuta N."/>
            <person name="Sato K."/>
            <person name="Tanikawa M."/>
            <person name="Yamazaki M."/>
            <person name="Ninomiya K."/>
            <person name="Ishibashi T."/>
            <person name="Yamashita H."/>
            <person name="Murakawa K."/>
            <person name="Fujimori K."/>
            <person name="Tanai H."/>
            <person name="Kimata M."/>
            <person name="Watanabe M."/>
            <person name="Hiraoka S."/>
            <person name="Chiba Y."/>
            <person name="Ishida S."/>
            <person name="Ono Y."/>
            <person name="Takiguchi S."/>
            <person name="Watanabe S."/>
            <person name="Yosida M."/>
            <person name="Hotuta T."/>
            <person name="Kusano J."/>
            <person name="Kanehori K."/>
            <person name="Takahashi-Fujii A."/>
            <person name="Hara H."/>
            <person name="Tanase T.-O."/>
            <person name="Nomura Y."/>
            <person name="Togiya S."/>
            <person name="Komai F."/>
            <person name="Hara R."/>
            <person name="Takeuchi K."/>
            <person name="Arita M."/>
            <person name="Imose N."/>
            <person name="Musashino K."/>
            <person name="Yuuki H."/>
            <person name="Oshima A."/>
            <person name="Sasaki N."/>
            <person name="Aotsuka S."/>
            <person name="Yoshikawa Y."/>
            <person name="Matsunawa H."/>
            <person name="Ichihara T."/>
            <person name="Shiohata N."/>
            <person name="Sano S."/>
            <person name="Moriya S."/>
            <person name="Momiyama H."/>
            <person name="Satoh N."/>
            <person name="Takami S."/>
            <person name="Terashima Y."/>
            <person name="Suzuki O."/>
            <person name="Nakagawa S."/>
            <person name="Senoh A."/>
            <person name="Mizoguchi H."/>
            <person name="Goto Y."/>
            <person name="Shimizu F."/>
            <person name="Wakebe H."/>
            <person name="Hishigaki H."/>
            <person name="Watanabe T."/>
            <person name="Sugiyama A."/>
            <person name="Takemoto M."/>
            <person name="Kawakami B."/>
            <person name="Yamazaki M."/>
            <person name="Watanabe K."/>
            <person name="Kumagai A."/>
            <person name="Itakura S."/>
            <person name="Fukuzumi Y."/>
            <person name="Fujimori Y."/>
            <person name="Komiyama M."/>
            <person name="Tashiro H."/>
            <person name="Tanigami A."/>
            <person name="Fujiwara T."/>
            <person name="Ono T."/>
            <person name="Yamada K."/>
            <person name="Fujii Y."/>
            <person name="Ozaki K."/>
            <person name="Hirao M."/>
            <person name="Ohmori Y."/>
            <person name="Kawabata A."/>
            <person name="Hikiji T."/>
            <person name="Kobatake N."/>
            <person name="Inagaki H."/>
            <person name="Ikema Y."/>
            <person name="Okamoto S."/>
            <person name="Okitani R."/>
            <person name="Kawakami T."/>
            <person name="Noguchi S."/>
            <person name="Itoh T."/>
            <person name="Shigeta K."/>
            <person name="Senba T."/>
            <person name="Matsumura K."/>
            <person name="Nakajima Y."/>
            <person name="Mizuno T."/>
            <person name="Morinaga M."/>
            <person name="Sasaki M."/>
            <person name="Togashi T."/>
            <person name="Oyama M."/>
            <person name="Hata H."/>
            <person name="Watanabe M."/>
            <person name="Komatsu T."/>
            <person name="Mizushima-Sugano J."/>
            <person name="Satoh T."/>
            <person name="Shirai Y."/>
            <person name="Takahashi Y."/>
            <person name="Nakagawa K."/>
            <person name="Okumura K."/>
            <person name="Nagase T."/>
            <person name="Nomura N."/>
            <person name="Kikuchi H."/>
            <person name="Masuho Y."/>
            <person name="Yamashita R."/>
            <person name="Nakai K."/>
            <person name="Yada T."/>
            <person name="Nakamura Y."/>
            <person name="Ohara O."/>
            <person name="Isogai T."/>
            <person name="Sugano S."/>
        </authorList>
    </citation>
    <scope>NUCLEOTIDE SEQUENCE [LARGE SCALE MRNA] (ISOFORM 2)</scope>
</reference>
<reference key="3">
    <citation type="journal article" date="2004" name="Nature">
        <title>The DNA sequence and analysis of human chromosome 13.</title>
        <authorList>
            <person name="Dunham A."/>
            <person name="Matthews L.H."/>
            <person name="Burton J."/>
            <person name="Ashurst J.L."/>
            <person name="Howe K.L."/>
            <person name="Ashcroft K.J."/>
            <person name="Beare D.M."/>
            <person name="Burford D.C."/>
            <person name="Hunt S.E."/>
            <person name="Griffiths-Jones S."/>
            <person name="Jones M.C."/>
            <person name="Keenan S.J."/>
            <person name="Oliver K."/>
            <person name="Scott C.E."/>
            <person name="Ainscough R."/>
            <person name="Almeida J.P."/>
            <person name="Ambrose K.D."/>
            <person name="Andrews D.T."/>
            <person name="Ashwell R.I.S."/>
            <person name="Babbage A.K."/>
            <person name="Bagguley C.L."/>
            <person name="Bailey J."/>
            <person name="Bannerjee R."/>
            <person name="Barlow K.F."/>
            <person name="Bates K."/>
            <person name="Beasley H."/>
            <person name="Bird C.P."/>
            <person name="Bray-Allen S."/>
            <person name="Brown A.J."/>
            <person name="Brown J.Y."/>
            <person name="Burrill W."/>
            <person name="Carder C."/>
            <person name="Carter N.P."/>
            <person name="Chapman J.C."/>
            <person name="Clamp M.E."/>
            <person name="Clark S.Y."/>
            <person name="Clarke G."/>
            <person name="Clee C.M."/>
            <person name="Clegg S.C."/>
            <person name="Cobley V."/>
            <person name="Collins J.E."/>
            <person name="Corby N."/>
            <person name="Coville G.J."/>
            <person name="Deloukas P."/>
            <person name="Dhami P."/>
            <person name="Dunham I."/>
            <person name="Dunn M."/>
            <person name="Earthrowl M.E."/>
            <person name="Ellington A.G."/>
            <person name="Faulkner L."/>
            <person name="Frankish A.G."/>
            <person name="Frankland J."/>
            <person name="French L."/>
            <person name="Garner P."/>
            <person name="Garnett J."/>
            <person name="Gilbert J.G.R."/>
            <person name="Gilson C.J."/>
            <person name="Ghori J."/>
            <person name="Grafham D.V."/>
            <person name="Gribble S.M."/>
            <person name="Griffiths C."/>
            <person name="Hall R.E."/>
            <person name="Hammond S."/>
            <person name="Harley J.L."/>
            <person name="Hart E.A."/>
            <person name="Heath P.D."/>
            <person name="Howden P.J."/>
            <person name="Huckle E.J."/>
            <person name="Hunt P.J."/>
            <person name="Hunt A.R."/>
            <person name="Johnson C."/>
            <person name="Johnson D."/>
            <person name="Kay M."/>
            <person name="Kimberley A.M."/>
            <person name="King A."/>
            <person name="Laird G.K."/>
            <person name="Langford C.J."/>
            <person name="Lawlor S."/>
            <person name="Leongamornlert D.A."/>
            <person name="Lloyd D.M."/>
            <person name="Lloyd C."/>
            <person name="Loveland J.E."/>
            <person name="Lovell J."/>
            <person name="Martin S."/>
            <person name="Mashreghi-Mohammadi M."/>
            <person name="McLaren S.J."/>
            <person name="McMurray A."/>
            <person name="Milne S."/>
            <person name="Moore M.J.F."/>
            <person name="Nickerson T."/>
            <person name="Palmer S.A."/>
            <person name="Pearce A.V."/>
            <person name="Peck A.I."/>
            <person name="Pelan S."/>
            <person name="Phillimore B."/>
            <person name="Porter K.M."/>
            <person name="Rice C.M."/>
            <person name="Searle S."/>
            <person name="Sehra H.K."/>
            <person name="Shownkeen R."/>
            <person name="Skuce C.D."/>
            <person name="Smith M."/>
            <person name="Steward C.A."/>
            <person name="Sycamore N."/>
            <person name="Tester J."/>
            <person name="Thomas D.W."/>
            <person name="Tracey A."/>
            <person name="Tromans A."/>
            <person name="Tubby B."/>
            <person name="Wall M."/>
            <person name="Wallis J.M."/>
            <person name="West A.P."/>
            <person name="Whitehead S.L."/>
            <person name="Willey D.L."/>
            <person name="Wilming L."/>
            <person name="Wray P.W."/>
            <person name="Wright M.W."/>
            <person name="Young L."/>
            <person name="Coulson A."/>
            <person name="Durbin R.M."/>
            <person name="Hubbard T."/>
            <person name="Sulston J.E."/>
            <person name="Beck S."/>
            <person name="Bentley D.R."/>
            <person name="Rogers J."/>
            <person name="Ross M.T."/>
        </authorList>
    </citation>
    <scope>NUCLEOTIDE SEQUENCE [LARGE SCALE GENOMIC DNA]</scope>
</reference>
<reference key="4">
    <citation type="submission" date="2005-07" db="EMBL/GenBank/DDBJ databases">
        <authorList>
            <person name="Mural R.J."/>
            <person name="Istrail S."/>
            <person name="Sutton G.G."/>
            <person name="Florea L."/>
            <person name="Halpern A.L."/>
            <person name="Mobarry C.M."/>
            <person name="Lippert R."/>
            <person name="Walenz B."/>
            <person name="Shatkay H."/>
            <person name="Dew I."/>
            <person name="Miller J.R."/>
            <person name="Flanigan M.J."/>
            <person name="Edwards N.J."/>
            <person name="Bolanos R."/>
            <person name="Fasulo D."/>
            <person name="Halldorsson B.V."/>
            <person name="Hannenhalli S."/>
            <person name="Turner R."/>
            <person name="Yooseph S."/>
            <person name="Lu F."/>
            <person name="Nusskern D.R."/>
            <person name="Shue B.C."/>
            <person name="Zheng X.H."/>
            <person name="Zhong F."/>
            <person name="Delcher A.L."/>
            <person name="Huson D.H."/>
            <person name="Kravitz S.A."/>
            <person name="Mouchard L."/>
            <person name="Reinert K."/>
            <person name="Remington K.A."/>
            <person name="Clark A.G."/>
            <person name="Waterman M.S."/>
            <person name="Eichler E.E."/>
            <person name="Adams M.D."/>
            <person name="Hunkapiller M.W."/>
            <person name="Myers E.W."/>
            <person name="Venter J.C."/>
        </authorList>
    </citation>
    <scope>NUCLEOTIDE SEQUENCE [LARGE SCALE GENOMIC DNA]</scope>
</reference>
<reference key="5">
    <citation type="journal article" date="2004" name="Genome Res.">
        <title>The status, quality, and expansion of the NIH full-length cDNA project: the Mammalian Gene Collection (MGC).</title>
        <authorList>
            <consortium name="The MGC Project Team"/>
        </authorList>
    </citation>
    <scope>NUCLEOTIDE SEQUENCE [LARGE SCALE MRNA] (ISOFORM 1)</scope>
    <source>
        <tissue>Muscle</tissue>
    </source>
</reference>
<reference key="6">
    <citation type="submission" date="2002-10" db="EMBL/GenBank/DDBJ databases">
        <authorList>
            <consortium name="NIEHS SNPs program"/>
        </authorList>
    </citation>
    <scope>NUCLEOTIDE SEQUENCE [GENOMIC DNA] OF 5-410</scope>
</reference>
<reference key="7">
    <citation type="journal article" date="1994" name="EMBO J.">
        <title>DP-1: a cell cycle-regulated and phosphorylated component of transcription factor DRTF1/E2F which is functionally important for recognition by pRb and the adenovirus E4 orf 6/7 protein.</title>
        <authorList>
            <person name="Bandara L.R."/>
            <person name="Lam E.W.-F."/>
            <person name="Soerensen T.S."/>
            <person name="Zamanian M."/>
            <person name="Girling R."/>
            <person name="la Thangue N.B."/>
        </authorList>
    </citation>
    <scope>PHOSPHORYLATION</scope>
</reference>
<reference key="8">
    <citation type="journal article" date="1995" name="Mol. Cell. Biol.">
        <title>In vivo association of E2F and DP family proteins.</title>
        <authorList>
            <person name="Wu C.-L."/>
            <person name="Zukerberg L.R."/>
            <person name="Ngwu C."/>
            <person name="Harlow E."/>
            <person name="Lees J.A."/>
        </authorList>
    </citation>
    <scope>FUNCTION</scope>
    <scope>SUBUNIT</scope>
</reference>
<reference key="9">
    <citation type="journal article" date="2002" name="Science">
        <title>A complex with chromatin modifiers that occupies E2F- and Myc-responsive genes in G0 cells.</title>
        <authorList>
            <person name="Ogawa H."/>
            <person name="Ishiguro K."/>
            <person name="Gaubatz S."/>
            <person name="Livingston D.M."/>
            <person name="Nakatani Y."/>
        </authorList>
    </citation>
    <scope>IDENTIFICATION IN COMPLEX WITH E2F6; MAX; MGA; EUHMTASE1; BAT8; CBX3; RING1; RNF2; MBLR; L3MBTL2 AND YAF2</scope>
</reference>
<reference key="10">
    <citation type="journal article" date="2007" name="Mol. Cell">
        <title>Evolutionarily conserved multisubunit RBL2/p130 and E2F4 protein complex represses human cell cycle-dependent genes in quiescence.</title>
        <authorList>
            <person name="Litovchick L."/>
            <person name="Sadasivam S."/>
            <person name="Florens L."/>
            <person name="Zhu X."/>
            <person name="Swanson S.K."/>
            <person name="Velmurugan S."/>
            <person name="Chen R."/>
            <person name="Washburn M.P."/>
            <person name="Liu X.S."/>
            <person name="DeCaprio J.A."/>
        </authorList>
    </citation>
    <scope>IDENTIFICATION IN THE DREAM COMPLEX</scope>
</reference>
<reference key="11">
    <citation type="journal article" date="2008" name="Proc. Natl. Acad. Sci. U.S.A.">
        <title>A quantitative atlas of mitotic phosphorylation.</title>
        <authorList>
            <person name="Dephoure N."/>
            <person name="Zhou C."/>
            <person name="Villen J."/>
            <person name="Beausoleil S.A."/>
            <person name="Bakalarski C.E."/>
            <person name="Elledge S.J."/>
            <person name="Gygi S.P."/>
        </authorList>
    </citation>
    <scope>IDENTIFICATION BY MASS SPECTROMETRY [LARGE SCALE ANALYSIS]</scope>
    <source>
        <tissue>Cervix carcinoma</tissue>
    </source>
</reference>
<reference key="12">
    <citation type="journal article" date="2009" name="Anal. Chem.">
        <title>Lys-N and trypsin cover complementary parts of the phosphoproteome in a refined SCX-based approach.</title>
        <authorList>
            <person name="Gauci S."/>
            <person name="Helbig A.O."/>
            <person name="Slijper M."/>
            <person name="Krijgsveld J."/>
            <person name="Heck A.J."/>
            <person name="Mohammed S."/>
        </authorList>
    </citation>
    <scope>IDENTIFICATION BY MASS SPECTROMETRY [LARGE SCALE ANALYSIS]</scope>
</reference>
<reference key="13">
    <citation type="journal article" date="2009" name="Sci. Signal.">
        <title>Quantitative phosphoproteomic analysis of T cell receptor signaling reveals system-wide modulation of protein-protein interactions.</title>
        <authorList>
            <person name="Mayya V."/>
            <person name="Lundgren D.H."/>
            <person name="Hwang S.-I."/>
            <person name="Rezaul K."/>
            <person name="Wu L."/>
            <person name="Eng J.K."/>
            <person name="Rodionov V."/>
            <person name="Han D.K."/>
        </authorList>
    </citation>
    <scope>PHOSPHORYLATION [LARGE SCALE ANALYSIS] AT SER-23</scope>
    <scope>IDENTIFICATION BY MASS SPECTROMETRY [LARGE SCALE ANALYSIS]</scope>
    <source>
        <tissue>Leukemic T-cell</tissue>
    </source>
</reference>
<reference key="14">
    <citation type="journal article" date="2009" name="Science">
        <title>Lysine acetylation targets protein complexes and co-regulates major cellular functions.</title>
        <authorList>
            <person name="Choudhary C."/>
            <person name="Kumar C."/>
            <person name="Gnad F."/>
            <person name="Nielsen M.L."/>
            <person name="Rehman M."/>
            <person name="Walther T.C."/>
            <person name="Olsen J.V."/>
            <person name="Mann M."/>
        </authorList>
    </citation>
    <scope>ACETYLATION [LARGE SCALE ANALYSIS] AT LYS-3</scope>
    <scope>IDENTIFICATION BY MASS SPECTROMETRY [LARGE SCALE ANALYSIS]</scope>
</reference>
<reference key="15">
    <citation type="journal article" date="2010" name="Mol. Cell. Biol.">
        <title>Repression of transcriptional activity of C/EBPalpha by E2F-dimerization partner complexes.</title>
        <authorList>
            <person name="Zaragoza K."/>
            <person name="Begay V."/>
            <person name="Schuetz A."/>
            <person name="Heinemann U."/>
            <person name="Leutz A."/>
        </authorList>
    </citation>
    <scope>FUNCTION</scope>
    <scope>INTERACTION WITH CEBPA</scope>
</reference>
<reference key="16">
    <citation type="journal article" date="2010" name="Sci. Signal.">
        <title>Quantitative phosphoproteomics reveals widespread full phosphorylation site occupancy during mitosis.</title>
        <authorList>
            <person name="Olsen J.V."/>
            <person name="Vermeulen M."/>
            <person name="Santamaria A."/>
            <person name="Kumar C."/>
            <person name="Miller M.L."/>
            <person name="Jensen L.J."/>
            <person name="Gnad F."/>
            <person name="Cox J."/>
            <person name="Jensen T.S."/>
            <person name="Nigg E.A."/>
            <person name="Brunak S."/>
            <person name="Mann M."/>
        </authorList>
    </citation>
    <scope>PHOSPHORYLATION [LARGE SCALE ANALYSIS] AT SER-23</scope>
    <scope>IDENTIFICATION BY MASS SPECTROMETRY [LARGE SCALE ANALYSIS]</scope>
    <source>
        <tissue>Cervix carcinoma</tissue>
    </source>
</reference>
<reference key="17">
    <citation type="journal article" date="2011" name="Sci. Signal.">
        <title>System-wide temporal characterization of the proteome and phosphoproteome of human embryonic stem cell differentiation.</title>
        <authorList>
            <person name="Rigbolt K.T."/>
            <person name="Prokhorova T.A."/>
            <person name="Akimov V."/>
            <person name="Henningsen J."/>
            <person name="Johansen P.T."/>
            <person name="Kratchmarova I."/>
            <person name="Kassem M."/>
            <person name="Mann M."/>
            <person name="Olsen J.V."/>
            <person name="Blagoev B."/>
        </authorList>
    </citation>
    <scope>PHOSPHORYLATION [LARGE SCALE ANALYSIS] AT SER-23</scope>
    <scope>IDENTIFICATION BY MASS SPECTROMETRY [LARGE SCALE ANALYSIS]</scope>
</reference>
<reference key="18">
    <citation type="journal article" date="2013" name="J. Proteome Res.">
        <title>Toward a comprehensive characterization of a human cancer cell phosphoproteome.</title>
        <authorList>
            <person name="Zhou H."/>
            <person name="Di Palma S."/>
            <person name="Preisinger C."/>
            <person name="Peng M."/>
            <person name="Polat A.N."/>
            <person name="Heck A.J."/>
            <person name="Mohammed S."/>
        </authorList>
    </citation>
    <scope>PHOSPHORYLATION [LARGE SCALE ANALYSIS] AT SER-23</scope>
    <scope>IDENTIFICATION BY MASS SPECTROMETRY [LARGE SCALE ANALYSIS]</scope>
    <source>
        <tissue>Cervix carcinoma</tissue>
        <tissue>Erythroleukemia</tissue>
    </source>
</reference>
<name>TFDP1_HUMAN</name>
<sequence length="410" mass="45070">MAKDAGLIEANGELKVFIDQNLSPGKGVVSLVAVHPSTVNPLGKQLLPKTFGQSNVNIAQQVVIGTPQRPAASNTLVVGSPHTPSTHFASQNQPSDSSPWSAGKRNRKGEKNGKGLRHFSMKVCEKVQRKGTTSYNEVADELVAEFSAADNHILPNESAYDQKNIRRRVYDALNVLMAMNIISKEKKEIKWIGLPTNSAQECQNLEVERQRRLERIKQKQSQLQELILQQIAFKNLVQRNRHAEQQASRPPPPNSVIHLPFIIVNTSKKTVIDCSISNDKFEYLFNFDNTFEIHDDIEVLKRMGMACGLESGSCSAEDLKMARSLVPKALEPYVTEMAQGTVGGVFITTAGSTSNGTRFSASDLTNGADGMLATSSNGSQYSGSRVETPVSYVGEDDEEDDDFNENDEDD</sequence>
<accession>Q14186</accession>
<accession>B4DLQ9</accession>
<accession>Q5JSB4</accession>
<accession>Q8IZL5</accession>
<gene>
    <name type="primary">TFDP1</name>
    <name type="synonym">DP1</name>
</gene>
<evidence type="ECO:0000250" key="1">
    <source>
        <dbReference type="UniProtKB" id="Q08639"/>
    </source>
</evidence>
<evidence type="ECO:0000255" key="2"/>
<evidence type="ECO:0000256" key="3">
    <source>
        <dbReference type="SAM" id="MobiDB-lite"/>
    </source>
</evidence>
<evidence type="ECO:0000269" key="4">
    <source>
    </source>
</evidence>
<evidence type="ECO:0000269" key="5">
    <source>
    </source>
</evidence>
<evidence type="ECO:0000269" key="6">
    <source>
    </source>
</evidence>
<evidence type="ECO:0000269" key="7">
    <source>
    </source>
</evidence>
<evidence type="ECO:0000269" key="8">
    <source>
    </source>
</evidence>
<evidence type="ECO:0000269" key="9">
    <source>
    </source>
</evidence>
<evidence type="ECO:0000303" key="10">
    <source>
    </source>
</evidence>
<evidence type="ECO:0000305" key="11"/>
<evidence type="ECO:0007744" key="12">
    <source>
    </source>
</evidence>
<evidence type="ECO:0007744" key="13">
    <source>
    </source>
</evidence>
<evidence type="ECO:0007744" key="14">
    <source>
    </source>
</evidence>
<evidence type="ECO:0007744" key="15">
    <source>
    </source>
</evidence>
<evidence type="ECO:0007744" key="16">
    <source>
    </source>
</evidence>
<evidence type="ECO:0007829" key="17">
    <source>
        <dbReference type="PDB" id="5TUU"/>
    </source>
</evidence>
<comment type="function">
    <text evidence="6 7 9">Can stimulate E2F-dependent transcription. Binds DNA cooperatively with E2F family members through the E2 recognition site, 5'-TTTC[CG]CGC-3', found in the promoter region of a number of genes whose products are involved in cell cycle regulation or in DNA replication (PubMed:7739537, PubMed:8405995). The E2F1:DP complex appears to mediate both cell proliferation and apoptosis. Blocks adipocyte differentiation by repressing CEBPA binding to its target gene promoters (PubMed:20176812).</text>
</comment>
<comment type="subunit">
    <text evidence="4 5 6 7 9">Component of the E2F:DP transcription factor complex. Forms heterodimers with E2F family members. The complex can interact with hypophosphorylated retinoblastoma protein RB1 and related proteins (RBL1 and RBL2) that inhibit the E2F transactivation domain. This repression involves recruitment of histone deacetylase (HDAC). During the cell cycle, from mid-to-late G1 phase, RB family members become phosphorylated, detach from the DRTF1/E2F complex to render E2F transcriptionally active. Viral oncoproteins, notably E1A, T-antigen and HPV E7, are capable of sequestering RB protein, thus releasing the active complex. Part of the E2F6.com-1 complex in G0 phase is composed of E2F6, MGA, MAX, TFDP1, CBX3, BAT8, EUHMTASE1, RING1, RNF2, MBLR, L3MBTL2 YAF2. Component of the DREAM complex (also named LINC complex) at least composed of E2F4, E2F5, LIN9, LIN37, LIN52, LIN54, MYBL1, MYBL2, RBL1, RBL2, RBBP4, TFDP1 and TFDP2. The complex exists in quiescent cells where it represses cell cycle-dependent genes. It dissociates in S phase when LIN9, LIN37, LIN52 and LIN54 form a subcomplex that binds to MYBL2. The complex TFDP1:E2F1 interacts with CEBPA; the interaction prevents CEBPA binding to target gene promoters and represses its transcriptional activity (PubMed:20176812).</text>
</comment>
<comment type="interaction">
    <interactant intactId="EBI-749713">
        <id>Q14186</id>
    </interactant>
    <interactant intactId="EBI-723489">
        <id>O14640</id>
        <label>DVL1</label>
    </interactant>
    <organismsDiffer>false</organismsDiffer>
    <experiments>3</experiments>
</comment>
<comment type="interaction">
    <interactant intactId="EBI-749713">
        <id>Q14186</id>
    </interactant>
    <interactant intactId="EBI-448924">
        <id>Q01094</id>
        <label>E2F1</label>
    </interactant>
    <organismsDiffer>false</organismsDiffer>
    <experiments>17</experiments>
</comment>
<comment type="interaction">
    <interactant intactId="EBI-749713">
        <id>Q14186</id>
    </interactant>
    <interactant intactId="EBI-718476">
        <id>Q14209</id>
        <label>E2F2</label>
    </interactant>
    <organismsDiffer>false</organismsDiffer>
    <experiments>3</experiments>
</comment>
<comment type="interaction">
    <interactant intactId="EBI-749713">
        <id>Q14186</id>
    </interactant>
    <interactant intactId="EBI-448943">
        <id>Q16254</id>
        <label>E2F4</label>
    </interactant>
    <organismsDiffer>false</organismsDiffer>
    <experiments>7</experiments>
</comment>
<comment type="interaction">
    <interactant intactId="EBI-749713">
        <id>Q14186</id>
    </interactant>
    <interactant intactId="EBI-749694">
        <id>O75461</id>
        <label>E2F6</label>
    </interactant>
    <organismsDiffer>false</organismsDiffer>
    <experiments>24</experiments>
</comment>
<comment type="interaction">
    <interactant intactId="EBI-749713">
        <id>Q14186</id>
    </interactant>
    <interactant intactId="EBI-751711">
        <id>P61244</id>
        <label>MAX</label>
    </interactant>
    <organismsDiffer>false</organismsDiffer>
    <experiments>7</experiments>
</comment>
<comment type="interaction">
    <interactant intactId="EBI-749713">
        <id>Q14186</id>
    </interactant>
    <interactant intactId="EBI-366978">
        <id>Q9UBE8</id>
        <label>NLK</label>
    </interactant>
    <organismsDiffer>false</organismsDiffer>
    <experiments>2</experiments>
</comment>
<comment type="subcellular location">
    <subcellularLocation>
        <location evidence="1">Nucleus</location>
    </subcellularLocation>
    <subcellularLocation>
        <location evidence="1">Cytoplasm</location>
    </subcellularLocation>
    <text evidence="1">Shuttles between the cytoplasm and nucleus and translocates into the nuclear compartment upon heterodimerization with E2F1.</text>
</comment>
<comment type="alternative products">
    <event type="alternative splicing"/>
    <isoform>
        <id>Q14186-1</id>
        <name>1</name>
        <sequence type="displayed"/>
    </isoform>
    <isoform>
        <id>Q14186-2</id>
        <name>2</name>
        <sequence type="described" ref="VSP_056499 VSP_056500"/>
    </isoform>
</comment>
<comment type="tissue specificity">
    <text>Highest levels in muscle. Also expressed in brain, placenta, liver and kidney. Lower levels in lung and pancreas. Not detected in heart.</text>
</comment>
<comment type="induction">
    <text>Down-regulated during differentiation.</text>
</comment>
<comment type="PTM">
    <text evidence="8">Phosphorylation by E2F1-bound cyclin A-CDK2, in the S phase, inhibits E2F-mediated DNA binding and transactivation.</text>
</comment>
<comment type="PTM">
    <text evidence="1">Ubiquitinated by the BCR(KBTBD5) complex, leading to its subsequent degradation.</text>
</comment>
<comment type="miscellaneous">
    <text>E2F/DP transactivation can be mediated by several cofactors including TBP, TFIIH, MDM2 and CBP.</text>
</comment>
<comment type="similarity">
    <text evidence="11">Belongs to the E2F/DP family.</text>
</comment>
<dbReference type="EMBL" id="L23959">
    <property type="protein sequence ID" value="AAA58440.1"/>
    <property type="molecule type" value="mRNA"/>
</dbReference>
<dbReference type="EMBL" id="AK297114">
    <property type="protein sequence ID" value="BAG59621.1"/>
    <property type="molecule type" value="mRNA"/>
</dbReference>
<dbReference type="EMBL" id="AL442125">
    <property type="status" value="NOT_ANNOTATED_CDS"/>
    <property type="molecule type" value="Genomic_DNA"/>
</dbReference>
<dbReference type="EMBL" id="CH471085">
    <property type="protein sequence ID" value="EAX09216.1"/>
    <property type="molecule type" value="Genomic_DNA"/>
</dbReference>
<dbReference type="EMBL" id="BC011685">
    <property type="protein sequence ID" value="AAH11685.1"/>
    <property type="molecule type" value="mRNA"/>
</dbReference>
<dbReference type="EMBL" id="AF550129">
    <property type="protein sequence ID" value="AAN46090.1"/>
    <property type="molecule type" value="Genomic_DNA"/>
</dbReference>
<dbReference type="CCDS" id="CCDS9538.1">
    <molecule id="Q14186-1"/>
</dbReference>
<dbReference type="PIR" id="A48585">
    <property type="entry name" value="A48585"/>
</dbReference>
<dbReference type="RefSeq" id="NP_009042.1">
    <molecule id="Q14186-1"/>
    <property type="nucleotide sequence ID" value="NM_007111.5"/>
</dbReference>
<dbReference type="RefSeq" id="XP_005268384.1">
    <molecule id="Q14186-1"/>
    <property type="nucleotide sequence ID" value="XM_005268327.2"/>
</dbReference>
<dbReference type="RefSeq" id="XP_005268388.1">
    <property type="nucleotide sequence ID" value="XM_005268331.1"/>
</dbReference>
<dbReference type="RefSeq" id="XP_047286518.1">
    <molecule id="Q14186-1"/>
    <property type="nucleotide sequence ID" value="XM_047430562.1"/>
</dbReference>
<dbReference type="RefSeq" id="XP_047286519.1">
    <molecule id="Q14186-1"/>
    <property type="nucleotide sequence ID" value="XM_047430563.1"/>
</dbReference>
<dbReference type="RefSeq" id="XP_047286520.1">
    <molecule id="Q14186-1"/>
    <property type="nucleotide sequence ID" value="XM_047430564.1"/>
</dbReference>
<dbReference type="RefSeq" id="XP_047286522.1">
    <molecule id="Q14186-1"/>
    <property type="nucleotide sequence ID" value="XM_047430566.1"/>
</dbReference>
<dbReference type="RefSeq" id="XP_054230864.1">
    <molecule id="Q14186-1"/>
    <property type="nucleotide sequence ID" value="XM_054374889.1"/>
</dbReference>
<dbReference type="RefSeq" id="XP_054230865.1">
    <molecule id="Q14186-1"/>
    <property type="nucleotide sequence ID" value="XM_054374890.1"/>
</dbReference>
<dbReference type="RefSeq" id="XP_054230866.1">
    <molecule id="Q14186-1"/>
    <property type="nucleotide sequence ID" value="XM_054374891.1"/>
</dbReference>
<dbReference type="RefSeq" id="XP_054230867.1">
    <molecule id="Q14186-1"/>
    <property type="nucleotide sequence ID" value="XM_054374892.1"/>
</dbReference>
<dbReference type="RefSeq" id="XP_054230868.1">
    <molecule id="Q14186-1"/>
    <property type="nucleotide sequence ID" value="XM_054374893.1"/>
</dbReference>
<dbReference type="PDB" id="2AZE">
    <property type="method" value="X-ray"/>
    <property type="resolution" value="2.55 A"/>
    <property type="chains" value="A=199-350"/>
</dbReference>
<dbReference type="PDB" id="5GOW">
    <property type="method" value="NMR"/>
    <property type="chains" value="A=392-410"/>
</dbReference>
<dbReference type="PDB" id="5TUU">
    <property type="method" value="X-ray"/>
    <property type="resolution" value="2.25 A"/>
    <property type="chains" value="A=199-350"/>
</dbReference>
<dbReference type="PDB" id="5TUV">
    <property type="method" value="X-ray"/>
    <property type="resolution" value="2.90 A"/>
    <property type="chains" value="A/D=199-350"/>
</dbReference>
<dbReference type="PDBsum" id="2AZE"/>
<dbReference type="PDBsum" id="5GOW"/>
<dbReference type="PDBsum" id="5TUU"/>
<dbReference type="PDBsum" id="5TUV"/>
<dbReference type="SASBDB" id="Q14186"/>
<dbReference type="SMR" id="Q14186"/>
<dbReference type="BioGRID" id="112885">
    <property type="interactions" value="132"/>
</dbReference>
<dbReference type="ComplexPortal" id="CPX-155">
    <property type="entry name" value="RB1-E2F1-DP1 transcriptional repressor complex"/>
</dbReference>
<dbReference type="ComplexPortal" id="CPX-175">
    <property type="entry name" value="RB1-E2F2-DP1 transcriptional repressor complex"/>
</dbReference>
<dbReference type="ComplexPortal" id="CPX-1971">
    <property type="entry name" value="E2F1-DP1 transcription factor complex"/>
</dbReference>
<dbReference type="ComplexPortal" id="CPX-1972">
    <property type="entry name" value="E2F2-DP1 transcription factor complex"/>
</dbReference>
<dbReference type="ComplexPortal" id="CPX-1973">
    <property type="entry name" value="E2F3-DP1 transcription factor complex"/>
</dbReference>
<dbReference type="ComplexPortal" id="CPX-2368">
    <property type="entry name" value="DREAM transcriptional repressor complex, RBL1 variant"/>
</dbReference>
<dbReference type="ComplexPortal" id="CPX-2552">
    <property type="entry name" value="E2F6-DP1 transcriptional repressor complex"/>
</dbReference>
<dbReference type="ComplexPortal" id="CPX-7461">
    <property type="entry name" value="DREAM transcriptional repressor complex, RBL2 variant"/>
</dbReference>
<dbReference type="ComplexPortal" id="CPX-7641">
    <property type="entry name" value="E2F4-DP1 transcriptional regulator complex"/>
</dbReference>
<dbReference type="ComplexPortal" id="CPX-7728">
    <property type="entry name" value="RB1-E2F3-DP1 transcriptional repressor complex"/>
</dbReference>
<dbReference type="CORUM" id="Q14186"/>
<dbReference type="DIP" id="DIP-238N"/>
<dbReference type="FunCoup" id="Q14186">
    <property type="interactions" value="4391"/>
</dbReference>
<dbReference type="IntAct" id="Q14186">
    <property type="interactions" value="90"/>
</dbReference>
<dbReference type="MINT" id="Q14186"/>
<dbReference type="STRING" id="9606.ENSP00000364519"/>
<dbReference type="ChEMBL" id="CHEMBL4523289"/>
<dbReference type="iPTMnet" id="Q14186"/>
<dbReference type="PhosphoSitePlus" id="Q14186"/>
<dbReference type="BioMuta" id="TFDP1"/>
<dbReference type="DMDM" id="3122926"/>
<dbReference type="jPOST" id="Q14186"/>
<dbReference type="MassIVE" id="Q14186"/>
<dbReference type="PaxDb" id="9606-ENSP00000364519"/>
<dbReference type="PeptideAtlas" id="Q14186"/>
<dbReference type="ProteomicsDB" id="4551"/>
<dbReference type="ProteomicsDB" id="59904">
    <molecule id="Q14186-1"/>
</dbReference>
<dbReference type="Pumba" id="Q14186"/>
<dbReference type="Antibodypedia" id="11828">
    <property type="antibodies" value="363 antibodies from 36 providers"/>
</dbReference>
<dbReference type="DNASU" id="7027"/>
<dbReference type="Ensembl" id="ENST00000375370.10">
    <molecule id="Q14186-1"/>
    <property type="protein sequence ID" value="ENSP00000364519.4"/>
    <property type="gene ID" value="ENSG00000198176.13"/>
</dbReference>
<dbReference type="GeneID" id="7027"/>
<dbReference type="KEGG" id="hsa:7027"/>
<dbReference type="MANE-Select" id="ENST00000375370.10">
    <property type="protein sequence ID" value="ENSP00000364519.4"/>
    <property type="RefSeq nucleotide sequence ID" value="NM_007111.5"/>
    <property type="RefSeq protein sequence ID" value="NP_009042.1"/>
</dbReference>
<dbReference type="UCSC" id="uc001vtw.4">
    <molecule id="Q14186-1"/>
    <property type="organism name" value="human"/>
</dbReference>
<dbReference type="AGR" id="HGNC:11749"/>
<dbReference type="CTD" id="7027"/>
<dbReference type="DisGeNET" id="7027"/>
<dbReference type="GeneCards" id="TFDP1"/>
<dbReference type="HGNC" id="HGNC:11749">
    <property type="gene designation" value="TFDP1"/>
</dbReference>
<dbReference type="HPA" id="ENSG00000198176">
    <property type="expression patterns" value="Tissue enhanced (bone)"/>
</dbReference>
<dbReference type="MIM" id="189902">
    <property type="type" value="gene"/>
</dbReference>
<dbReference type="neXtProt" id="NX_Q14186"/>
<dbReference type="OpenTargets" id="ENSG00000198176"/>
<dbReference type="PharmGKB" id="PA36464"/>
<dbReference type="VEuPathDB" id="HostDB:ENSG00000198176"/>
<dbReference type="eggNOG" id="KOG2829">
    <property type="taxonomic scope" value="Eukaryota"/>
</dbReference>
<dbReference type="GeneTree" id="ENSGT00940000154652"/>
<dbReference type="HOGENOM" id="CLU_039874_3_1_1"/>
<dbReference type="InParanoid" id="Q14186"/>
<dbReference type="OMA" id="MSPNDAH"/>
<dbReference type="OrthoDB" id="552115at2759"/>
<dbReference type="PAN-GO" id="Q14186">
    <property type="GO annotations" value="4 GO annotations based on evolutionary models"/>
</dbReference>
<dbReference type="PhylomeDB" id="Q14186"/>
<dbReference type="TreeFam" id="TF314396"/>
<dbReference type="PathwayCommons" id="Q14186"/>
<dbReference type="Reactome" id="R-HSA-111448">
    <property type="pathway name" value="Activation of NOXA and translocation to mitochondria"/>
</dbReference>
<dbReference type="Reactome" id="R-HSA-113501">
    <property type="pathway name" value="Inhibition of replication initiation of damaged DNA by RB1/E2F1"/>
</dbReference>
<dbReference type="Reactome" id="R-HSA-1362277">
    <property type="pathway name" value="Transcription of E2F targets under negative control by DREAM complex"/>
</dbReference>
<dbReference type="Reactome" id="R-HSA-1362300">
    <property type="pathway name" value="Transcription of E2F targets under negative control by p107 (RBL1) and p130 (RBL2) in complex with HDAC1"/>
</dbReference>
<dbReference type="Reactome" id="R-HSA-139915">
    <property type="pathway name" value="Activation of PUMA and translocation to mitochondria"/>
</dbReference>
<dbReference type="Reactome" id="R-HSA-1538133">
    <property type="pathway name" value="G0 and Early G1"/>
</dbReference>
<dbReference type="Reactome" id="R-HSA-1912408">
    <property type="pathway name" value="Pre-NOTCH Transcription and Translation"/>
</dbReference>
<dbReference type="Reactome" id="R-HSA-2173796">
    <property type="pathway name" value="SMAD2/SMAD3:SMAD4 heterotrimer regulates transcription"/>
</dbReference>
<dbReference type="Reactome" id="R-HSA-2559580">
    <property type="pathway name" value="Oxidative Stress Induced Senescence"/>
</dbReference>
<dbReference type="Reactome" id="R-HSA-2559585">
    <property type="pathway name" value="Oncogene Induced Senescence"/>
</dbReference>
<dbReference type="Reactome" id="R-HSA-6804114">
    <property type="pathway name" value="TP53 Regulates Transcription of Genes Involved in G2 Cell Cycle Arrest"/>
</dbReference>
<dbReference type="Reactome" id="R-HSA-69202">
    <property type="pathway name" value="Cyclin E associated events during G1/S transition"/>
</dbReference>
<dbReference type="Reactome" id="R-HSA-69205">
    <property type="pathway name" value="G1/S-Specific Transcription"/>
</dbReference>
<dbReference type="Reactome" id="R-HSA-69231">
    <property type="pathway name" value="Cyclin D associated events in G1"/>
</dbReference>
<dbReference type="Reactome" id="R-HSA-69656">
    <property type="pathway name" value="Cyclin A:Cdk2-associated events at S phase entry"/>
</dbReference>
<dbReference type="Reactome" id="R-HSA-8953750">
    <property type="pathway name" value="Transcriptional Regulation by E2F6"/>
</dbReference>
<dbReference type="Reactome" id="R-HSA-9616222">
    <property type="pathway name" value="Transcriptional regulation of granulopoiesis"/>
</dbReference>
<dbReference type="Reactome" id="R-HSA-9661069">
    <property type="pathway name" value="Defective binding of RB1 mutants to E2F1,(E2F2, E2F3)"/>
</dbReference>
<dbReference type="SignaLink" id="Q14186"/>
<dbReference type="SIGNOR" id="Q14186"/>
<dbReference type="BioGRID-ORCS" id="7027">
    <property type="hits" value="443 hits in 1187 CRISPR screens"/>
</dbReference>
<dbReference type="ChiTaRS" id="TFDP1">
    <property type="organism name" value="human"/>
</dbReference>
<dbReference type="EvolutionaryTrace" id="Q14186"/>
<dbReference type="GeneWiki" id="TFDP1"/>
<dbReference type="GenomeRNAi" id="7027"/>
<dbReference type="Pharos" id="Q14186">
    <property type="development level" value="Tbio"/>
</dbReference>
<dbReference type="PRO" id="PR:Q14186"/>
<dbReference type="Proteomes" id="UP000005640">
    <property type="component" value="Chromosome 13"/>
</dbReference>
<dbReference type="RNAct" id="Q14186">
    <property type="molecule type" value="protein"/>
</dbReference>
<dbReference type="Bgee" id="ENSG00000198176">
    <property type="expression patterns" value="Expressed in secondary oocyte and 207 other cell types or tissues"/>
</dbReference>
<dbReference type="ExpressionAtlas" id="Q14186">
    <property type="expression patterns" value="baseline and differential"/>
</dbReference>
<dbReference type="GO" id="GO:0000785">
    <property type="term" value="C:chromatin"/>
    <property type="evidence" value="ECO:0000247"/>
    <property type="project" value="NTNU_SB"/>
</dbReference>
<dbReference type="GO" id="GO:0005737">
    <property type="term" value="C:cytoplasm"/>
    <property type="evidence" value="ECO:0000314"/>
    <property type="project" value="UniProtKB"/>
</dbReference>
<dbReference type="GO" id="GO:0005829">
    <property type="term" value="C:cytosol"/>
    <property type="evidence" value="ECO:0000314"/>
    <property type="project" value="HPA"/>
</dbReference>
<dbReference type="GO" id="GO:0005654">
    <property type="term" value="C:nucleoplasm"/>
    <property type="evidence" value="ECO:0000314"/>
    <property type="project" value="HPA"/>
</dbReference>
<dbReference type="GO" id="GO:0005634">
    <property type="term" value="C:nucleus"/>
    <property type="evidence" value="ECO:0000314"/>
    <property type="project" value="ComplexPortal"/>
</dbReference>
<dbReference type="GO" id="GO:0035189">
    <property type="term" value="C:Rb-E2F complex"/>
    <property type="evidence" value="ECO:0000353"/>
    <property type="project" value="ComplexPortal"/>
</dbReference>
<dbReference type="GO" id="GO:0090575">
    <property type="term" value="C:RNA polymerase II transcription regulator complex"/>
    <property type="evidence" value="ECO:0000314"/>
    <property type="project" value="NTNU_SB"/>
</dbReference>
<dbReference type="GO" id="GO:0000987">
    <property type="term" value="F:cis-regulatory region sequence-specific DNA binding"/>
    <property type="evidence" value="ECO:0007669"/>
    <property type="project" value="Ensembl"/>
</dbReference>
<dbReference type="GO" id="GO:0003700">
    <property type="term" value="F:DNA-binding transcription factor activity"/>
    <property type="evidence" value="ECO:0000304"/>
    <property type="project" value="ProtInc"/>
</dbReference>
<dbReference type="GO" id="GO:0000981">
    <property type="term" value="F:DNA-binding transcription factor activity, RNA polymerase II-specific"/>
    <property type="evidence" value="ECO:0000247"/>
    <property type="project" value="NTNU_SB"/>
</dbReference>
<dbReference type="GO" id="GO:0140297">
    <property type="term" value="F:DNA-binding transcription factor binding"/>
    <property type="evidence" value="ECO:0000353"/>
    <property type="project" value="UniProtKB"/>
</dbReference>
<dbReference type="GO" id="GO:0019904">
    <property type="term" value="F:protein domain specific binding"/>
    <property type="evidence" value="ECO:0000353"/>
    <property type="project" value="UniProtKB"/>
</dbReference>
<dbReference type="GO" id="GO:0043276">
    <property type="term" value="P:anoikis"/>
    <property type="evidence" value="ECO:0007669"/>
    <property type="project" value="Ensembl"/>
</dbReference>
<dbReference type="GO" id="GO:0008544">
    <property type="term" value="P:epidermis development"/>
    <property type="evidence" value="ECO:0007669"/>
    <property type="project" value="Ensembl"/>
</dbReference>
<dbReference type="GO" id="GO:0070345">
    <property type="term" value="P:negative regulation of fat cell proliferation"/>
    <property type="evidence" value="ECO:0000250"/>
    <property type="project" value="UniProtKB"/>
</dbReference>
<dbReference type="GO" id="GO:0051091">
    <property type="term" value="P:positive regulation of DNA-binding transcription factor activity"/>
    <property type="evidence" value="ECO:0000314"/>
    <property type="project" value="UniProtKB"/>
</dbReference>
<dbReference type="GO" id="GO:1900087">
    <property type="term" value="P:positive regulation of G1/S transition of mitotic cell cycle"/>
    <property type="evidence" value="ECO:0000314"/>
    <property type="project" value="UniProtKB"/>
</dbReference>
<dbReference type="GO" id="GO:0045944">
    <property type="term" value="P:positive regulation of transcription by RNA polymerase II"/>
    <property type="evidence" value="ECO:0000314"/>
    <property type="project" value="NTNU_SB"/>
</dbReference>
<dbReference type="GO" id="GO:2000278">
    <property type="term" value="P:regulation of DNA biosynthetic process"/>
    <property type="evidence" value="ECO:0007669"/>
    <property type="project" value="Ensembl"/>
</dbReference>
<dbReference type="GO" id="GO:0006355">
    <property type="term" value="P:regulation of DNA-templated transcription"/>
    <property type="evidence" value="ECO:0000314"/>
    <property type="project" value="ComplexPortal"/>
</dbReference>
<dbReference type="GO" id="GO:0006357">
    <property type="term" value="P:regulation of transcription by RNA polymerase II"/>
    <property type="evidence" value="ECO:0000318"/>
    <property type="project" value="GO_Central"/>
</dbReference>
<dbReference type="GO" id="GO:0006366">
    <property type="term" value="P:transcription by RNA polymerase II"/>
    <property type="evidence" value="ECO:0000315"/>
    <property type="project" value="CACAO"/>
</dbReference>
<dbReference type="CDD" id="cd14458">
    <property type="entry name" value="DP_DD"/>
    <property type="match status" value="1"/>
</dbReference>
<dbReference type="FunFam" id="1.10.10.10:FF:000047">
    <property type="entry name" value="Transcription factor"/>
    <property type="match status" value="1"/>
</dbReference>
<dbReference type="FunFam" id="1.20.140.80:FF:000001">
    <property type="entry name" value="Transcription factor"/>
    <property type="match status" value="1"/>
</dbReference>
<dbReference type="Gene3D" id="1.20.140.80">
    <property type="entry name" value="Transcription factor DP"/>
    <property type="match status" value="1"/>
</dbReference>
<dbReference type="Gene3D" id="1.10.10.10">
    <property type="entry name" value="Winged helix-like DNA-binding domain superfamily/Winged helix DNA-binding domain"/>
    <property type="match status" value="1"/>
</dbReference>
<dbReference type="IDEAL" id="IID00076"/>
<dbReference type="InterPro" id="IPR037241">
    <property type="entry name" value="E2F-DP_heterodim"/>
</dbReference>
<dbReference type="InterPro" id="IPR003316">
    <property type="entry name" value="E2F_WHTH_DNA-bd_dom"/>
</dbReference>
<dbReference type="InterPro" id="IPR038168">
    <property type="entry name" value="TF_DP_C_sf"/>
</dbReference>
<dbReference type="InterPro" id="IPR014889">
    <property type="entry name" value="Transc_factor_DP_C"/>
</dbReference>
<dbReference type="InterPro" id="IPR015648">
    <property type="entry name" value="Transcrpt_fac_DP"/>
</dbReference>
<dbReference type="InterPro" id="IPR036388">
    <property type="entry name" value="WH-like_DNA-bd_sf"/>
</dbReference>
<dbReference type="InterPro" id="IPR036390">
    <property type="entry name" value="WH_DNA-bd_sf"/>
</dbReference>
<dbReference type="PANTHER" id="PTHR12548">
    <property type="entry name" value="TRANSCRIPTION FACTOR DP"/>
    <property type="match status" value="1"/>
</dbReference>
<dbReference type="PANTHER" id="PTHR12548:SF4">
    <property type="entry name" value="TRANSCRIPTION FACTOR DP-1"/>
    <property type="match status" value="1"/>
</dbReference>
<dbReference type="Pfam" id="PF08781">
    <property type="entry name" value="DP"/>
    <property type="match status" value="1"/>
</dbReference>
<dbReference type="Pfam" id="PF02319">
    <property type="entry name" value="E2F_TDP"/>
    <property type="match status" value="1"/>
</dbReference>
<dbReference type="PIRSF" id="PIRSF009404">
    <property type="entry name" value="Transcription_factor_DP"/>
    <property type="match status" value="1"/>
</dbReference>
<dbReference type="SMART" id="SM01138">
    <property type="entry name" value="DP"/>
    <property type="match status" value="1"/>
</dbReference>
<dbReference type="SMART" id="SM01372">
    <property type="entry name" value="E2F_TDP"/>
    <property type="match status" value="1"/>
</dbReference>
<dbReference type="SUPFAM" id="SSF144074">
    <property type="entry name" value="E2F-DP heterodimerization region"/>
    <property type="match status" value="1"/>
</dbReference>
<dbReference type="SUPFAM" id="SSF46785">
    <property type="entry name" value="Winged helix' DNA-binding domain"/>
    <property type="match status" value="1"/>
</dbReference>
<proteinExistence type="evidence at protein level"/>
<protein>
    <recommendedName>
        <fullName>Transcription factor Dp-1</fullName>
    </recommendedName>
    <alternativeName>
        <fullName>DRTF1-polypeptide 1</fullName>
        <shortName>DRTF1</shortName>
    </alternativeName>
    <alternativeName>
        <fullName>E2F dimerization partner 1</fullName>
    </alternativeName>
</protein>